<name>RS16_PELUB</name>
<feature type="chain" id="PRO_0000243841" description="Small ribosomal subunit protein bS16">
    <location>
        <begin position="1"/>
        <end position="177"/>
    </location>
</feature>
<feature type="region of interest" description="Disordered" evidence="2">
    <location>
        <begin position="80"/>
        <end position="177"/>
    </location>
</feature>
<feature type="compositionally biased region" description="Low complexity" evidence="2">
    <location>
        <begin position="107"/>
        <end position="122"/>
    </location>
</feature>
<organism>
    <name type="scientific">Pelagibacter ubique (strain HTCC1062)</name>
    <dbReference type="NCBI Taxonomy" id="335992"/>
    <lineage>
        <taxon>Bacteria</taxon>
        <taxon>Pseudomonadati</taxon>
        <taxon>Pseudomonadota</taxon>
        <taxon>Alphaproteobacteria</taxon>
        <taxon>Candidatus Pelagibacterales</taxon>
        <taxon>Candidatus Pelagibacteraceae</taxon>
        <taxon>Candidatus Pelagibacter</taxon>
    </lineage>
</organism>
<dbReference type="EMBL" id="CP000084">
    <property type="protein sequence ID" value="AAZ21077.1"/>
    <property type="molecule type" value="Genomic_DNA"/>
</dbReference>
<dbReference type="RefSeq" id="WP_011281575.1">
    <property type="nucleotide sequence ID" value="NC_007205.1"/>
</dbReference>
<dbReference type="SMR" id="Q4FP12"/>
<dbReference type="STRING" id="335992.SAR11_0255"/>
<dbReference type="GeneID" id="66294753"/>
<dbReference type="KEGG" id="pub:SAR11_0255"/>
<dbReference type="eggNOG" id="COG0228">
    <property type="taxonomic scope" value="Bacteria"/>
</dbReference>
<dbReference type="HOGENOM" id="CLU_100590_3_0_5"/>
<dbReference type="OrthoDB" id="9807878at2"/>
<dbReference type="Proteomes" id="UP000002528">
    <property type="component" value="Chromosome"/>
</dbReference>
<dbReference type="GO" id="GO:0005737">
    <property type="term" value="C:cytoplasm"/>
    <property type="evidence" value="ECO:0007669"/>
    <property type="project" value="UniProtKB-ARBA"/>
</dbReference>
<dbReference type="GO" id="GO:0015935">
    <property type="term" value="C:small ribosomal subunit"/>
    <property type="evidence" value="ECO:0007669"/>
    <property type="project" value="TreeGrafter"/>
</dbReference>
<dbReference type="GO" id="GO:0003735">
    <property type="term" value="F:structural constituent of ribosome"/>
    <property type="evidence" value="ECO:0007669"/>
    <property type="project" value="InterPro"/>
</dbReference>
<dbReference type="GO" id="GO:0006412">
    <property type="term" value="P:translation"/>
    <property type="evidence" value="ECO:0007669"/>
    <property type="project" value="UniProtKB-UniRule"/>
</dbReference>
<dbReference type="Gene3D" id="3.30.1320.10">
    <property type="match status" value="1"/>
</dbReference>
<dbReference type="HAMAP" id="MF_00385">
    <property type="entry name" value="Ribosomal_bS16"/>
    <property type="match status" value="1"/>
</dbReference>
<dbReference type="InterPro" id="IPR000307">
    <property type="entry name" value="Ribosomal_bS16"/>
</dbReference>
<dbReference type="InterPro" id="IPR023803">
    <property type="entry name" value="Ribosomal_bS16_dom_sf"/>
</dbReference>
<dbReference type="NCBIfam" id="TIGR00002">
    <property type="entry name" value="S16"/>
    <property type="match status" value="1"/>
</dbReference>
<dbReference type="PANTHER" id="PTHR12919">
    <property type="entry name" value="30S RIBOSOMAL PROTEIN S16"/>
    <property type="match status" value="1"/>
</dbReference>
<dbReference type="PANTHER" id="PTHR12919:SF20">
    <property type="entry name" value="SMALL RIBOSOMAL SUBUNIT PROTEIN BS16M"/>
    <property type="match status" value="1"/>
</dbReference>
<dbReference type="Pfam" id="PF00886">
    <property type="entry name" value="Ribosomal_S16"/>
    <property type="match status" value="1"/>
</dbReference>
<dbReference type="SUPFAM" id="SSF54565">
    <property type="entry name" value="Ribosomal protein S16"/>
    <property type="match status" value="1"/>
</dbReference>
<sequence>MIKIRLSRGGTKKRPVYKVVIADSRRARDGRFIEKVGFFNPLLPKDKKERVGLEAERIKYWLGQGAQPTTRVARILGENGIIAMPANGSNPSKAIPKKERKKEGDEAAPAAAPKAEAAPAAEAPKEEAPKAEAAPAAEAPKEEAPKAEAAPAAEAPKEEAPKAEAAPAAEAPKEEAK</sequence>
<reference key="1">
    <citation type="journal article" date="2005" name="Science">
        <title>Genome streamlining in a cosmopolitan oceanic bacterium.</title>
        <authorList>
            <person name="Giovannoni S.J."/>
            <person name="Tripp H.J."/>
            <person name="Givan S."/>
            <person name="Podar M."/>
            <person name="Vergin K.L."/>
            <person name="Baptista D."/>
            <person name="Bibbs L."/>
            <person name="Eads J."/>
            <person name="Richardson T.H."/>
            <person name="Noordewier M."/>
            <person name="Rappe M.S."/>
            <person name="Short J.M."/>
            <person name="Carrington J.C."/>
            <person name="Mathur E.J."/>
        </authorList>
    </citation>
    <scope>NUCLEOTIDE SEQUENCE [LARGE SCALE GENOMIC DNA]</scope>
    <source>
        <strain>HTCC1062</strain>
    </source>
</reference>
<proteinExistence type="inferred from homology"/>
<evidence type="ECO:0000255" key="1">
    <source>
        <dbReference type="HAMAP-Rule" id="MF_00385"/>
    </source>
</evidence>
<evidence type="ECO:0000256" key="2">
    <source>
        <dbReference type="SAM" id="MobiDB-lite"/>
    </source>
</evidence>
<evidence type="ECO:0000305" key="3"/>
<comment type="similarity">
    <text evidence="1">Belongs to the bacterial ribosomal protein bS16 family.</text>
</comment>
<gene>
    <name evidence="1" type="primary">rpsP</name>
    <name type="ordered locus">SAR11_0255</name>
</gene>
<accession>Q4FP12</accession>
<keyword id="KW-1185">Reference proteome</keyword>
<keyword id="KW-0687">Ribonucleoprotein</keyword>
<keyword id="KW-0689">Ribosomal protein</keyword>
<protein>
    <recommendedName>
        <fullName evidence="1">Small ribosomal subunit protein bS16</fullName>
    </recommendedName>
    <alternativeName>
        <fullName evidence="3">30S ribosomal protein S16</fullName>
    </alternativeName>
</protein>